<dbReference type="EC" id="2.7.7.8" evidence="1"/>
<dbReference type="EMBL" id="CP000803">
    <property type="protein sequence ID" value="ABU62096.1"/>
    <property type="molecule type" value="Genomic_DNA"/>
</dbReference>
<dbReference type="RefSeq" id="WP_003016880.1">
    <property type="nucleotide sequence ID" value="NC_009749.1"/>
</dbReference>
<dbReference type="SMR" id="A7NDP3"/>
<dbReference type="KEGG" id="fta:FTA_1621"/>
<dbReference type="HOGENOM" id="CLU_004217_2_2_6"/>
<dbReference type="GO" id="GO:0005829">
    <property type="term" value="C:cytosol"/>
    <property type="evidence" value="ECO:0007669"/>
    <property type="project" value="TreeGrafter"/>
</dbReference>
<dbReference type="GO" id="GO:0000175">
    <property type="term" value="F:3'-5'-RNA exonuclease activity"/>
    <property type="evidence" value="ECO:0007669"/>
    <property type="project" value="TreeGrafter"/>
</dbReference>
<dbReference type="GO" id="GO:0000287">
    <property type="term" value="F:magnesium ion binding"/>
    <property type="evidence" value="ECO:0007669"/>
    <property type="project" value="UniProtKB-UniRule"/>
</dbReference>
<dbReference type="GO" id="GO:0004654">
    <property type="term" value="F:polyribonucleotide nucleotidyltransferase activity"/>
    <property type="evidence" value="ECO:0007669"/>
    <property type="project" value="UniProtKB-UniRule"/>
</dbReference>
<dbReference type="GO" id="GO:0003723">
    <property type="term" value="F:RNA binding"/>
    <property type="evidence" value="ECO:0007669"/>
    <property type="project" value="UniProtKB-UniRule"/>
</dbReference>
<dbReference type="GO" id="GO:0006402">
    <property type="term" value="P:mRNA catabolic process"/>
    <property type="evidence" value="ECO:0007669"/>
    <property type="project" value="UniProtKB-UniRule"/>
</dbReference>
<dbReference type="GO" id="GO:0006396">
    <property type="term" value="P:RNA processing"/>
    <property type="evidence" value="ECO:0007669"/>
    <property type="project" value="InterPro"/>
</dbReference>
<dbReference type="CDD" id="cd02393">
    <property type="entry name" value="KH-I_PNPase"/>
    <property type="match status" value="1"/>
</dbReference>
<dbReference type="CDD" id="cd11363">
    <property type="entry name" value="RNase_PH_PNPase_1"/>
    <property type="match status" value="1"/>
</dbReference>
<dbReference type="CDD" id="cd11364">
    <property type="entry name" value="RNase_PH_PNPase_2"/>
    <property type="match status" value="1"/>
</dbReference>
<dbReference type="FunFam" id="3.30.1370.10:FF:000001">
    <property type="entry name" value="Polyribonucleotide nucleotidyltransferase"/>
    <property type="match status" value="1"/>
</dbReference>
<dbReference type="FunFam" id="3.30.230.70:FF:000001">
    <property type="entry name" value="Polyribonucleotide nucleotidyltransferase"/>
    <property type="match status" value="1"/>
</dbReference>
<dbReference type="FunFam" id="3.30.230.70:FF:000002">
    <property type="entry name" value="Polyribonucleotide nucleotidyltransferase"/>
    <property type="match status" value="1"/>
</dbReference>
<dbReference type="Gene3D" id="3.30.230.70">
    <property type="entry name" value="GHMP Kinase, N-terminal domain"/>
    <property type="match status" value="2"/>
</dbReference>
<dbReference type="Gene3D" id="3.30.1370.10">
    <property type="entry name" value="K Homology domain, type 1"/>
    <property type="match status" value="1"/>
</dbReference>
<dbReference type="Gene3D" id="2.40.50.140">
    <property type="entry name" value="Nucleic acid-binding proteins"/>
    <property type="match status" value="1"/>
</dbReference>
<dbReference type="HAMAP" id="MF_01595">
    <property type="entry name" value="PNPase"/>
    <property type="match status" value="1"/>
</dbReference>
<dbReference type="InterPro" id="IPR001247">
    <property type="entry name" value="ExoRNase_PH_dom1"/>
</dbReference>
<dbReference type="InterPro" id="IPR015847">
    <property type="entry name" value="ExoRNase_PH_dom2"/>
</dbReference>
<dbReference type="InterPro" id="IPR036345">
    <property type="entry name" value="ExoRNase_PH_dom2_sf"/>
</dbReference>
<dbReference type="InterPro" id="IPR004087">
    <property type="entry name" value="KH_dom"/>
</dbReference>
<dbReference type="InterPro" id="IPR004088">
    <property type="entry name" value="KH_dom_type_1"/>
</dbReference>
<dbReference type="InterPro" id="IPR036612">
    <property type="entry name" value="KH_dom_type_1_sf"/>
</dbReference>
<dbReference type="InterPro" id="IPR012340">
    <property type="entry name" value="NA-bd_OB-fold"/>
</dbReference>
<dbReference type="InterPro" id="IPR012162">
    <property type="entry name" value="PNPase"/>
</dbReference>
<dbReference type="InterPro" id="IPR027408">
    <property type="entry name" value="PNPase/RNase_PH_dom_sf"/>
</dbReference>
<dbReference type="InterPro" id="IPR015848">
    <property type="entry name" value="PNPase_PH_RNA-bd_bac/org-type"/>
</dbReference>
<dbReference type="InterPro" id="IPR036456">
    <property type="entry name" value="PNPase_PH_RNA-bd_sf"/>
</dbReference>
<dbReference type="InterPro" id="IPR020568">
    <property type="entry name" value="Ribosomal_Su5_D2-typ_SF"/>
</dbReference>
<dbReference type="InterPro" id="IPR003029">
    <property type="entry name" value="S1_domain"/>
</dbReference>
<dbReference type="NCBIfam" id="TIGR03591">
    <property type="entry name" value="polynuc_phos"/>
    <property type="match status" value="1"/>
</dbReference>
<dbReference type="NCBIfam" id="NF008805">
    <property type="entry name" value="PRK11824.1"/>
    <property type="match status" value="1"/>
</dbReference>
<dbReference type="PANTHER" id="PTHR11252">
    <property type="entry name" value="POLYRIBONUCLEOTIDE NUCLEOTIDYLTRANSFERASE"/>
    <property type="match status" value="1"/>
</dbReference>
<dbReference type="PANTHER" id="PTHR11252:SF0">
    <property type="entry name" value="POLYRIBONUCLEOTIDE NUCLEOTIDYLTRANSFERASE 1, MITOCHONDRIAL"/>
    <property type="match status" value="1"/>
</dbReference>
<dbReference type="Pfam" id="PF00013">
    <property type="entry name" value="KH_1"/>
    <property type="match status" value="1"/>
</dbReference>
<dbReference type="Pfam" id="PF03726">
    <property type="entry name" value="PNPase"/>
    <property type="match status" value="1"/>
</dbReference>
<dbReference type="Pfam" id="PF01138">
    <property type="entry name" value="RNase_PH"/>
    <property type="match status" value="2"/>
</dbReference>
<dbReference type="Pfam" id="PF03725">
    <property type="entry name" value="RNase_PH_C"/>
    <property type="match status" value="2"/>
</dbReference>
<dbReference type="Pfam" id="PF00575">
    <property type="entry name" value="S1"/>
    <property type="match status" value="1"/>
</dbReference>
<dbReference type="PIRSF" id="PIRSF005499">
    <property type="entry name" value="PNPase"/>
    <property type="match status" value="1"/>
</dbReference>
<dbReference type="SMART" id="SM00322">
    <property type="entry name" value="KH"/>
    <property type="match status" value="1"/>
</dbReference>
<dbReference type="SMART" id="SM00316">
    <property type="entry name" value="S1"/>
    <property type="match status" value="1"/>
</dbReference>
<dbReference type="SUPFAM" id="SSF54791">
    <property type="entry name" value="Eukaryotic type KH-domain (KH-domain type I)"/>
    <property type="match status" value="1"/>
</dbReference>
<dbReference type="SUPFAM" id="SSF50249">
    <property type="entry name" value="Nucleic acid-binding proteins"/>
    <property type="match status" value="1"/>
</dbReference>
<dbReference type="SUPFAM" id="SSF46915">
    <property type="entry name" value="Polynucleotide phosphorylase/guanosine pentaphosphate synthase (PNPase/GPSI), domain 3"/>
    <property type="match status" value="1"/>
</dbReference>
<dbReference type="SUPFAM" id="SSF55666">
    <property type="entry name" value="Ribonuclease PH domain 2-like"/>
    <property type="match status" value="2"/>
</dbReference>
<dbReference type="SUPFAM" id="SSF54211">
    <property type="entry name" value="Ribosomal protein S5 domain 2-like"/>
    <property type="match status" value="2"/>
</dbReference>
<dbReference type="PROSITE" id="PS50084">
    <property type="entry name" value="KH_TYPE_1"/>
    <property type="match status" value="1"/>
</dbReference>
<dbReference type="PROSITE" id="PS50126">
    <property type="entry name" value="S1"/>
    <property type="match status" value="1"/>
</dbReference>
<accession>A7NDP3</accession>
<sequence>MKIFREVFELGNKEIILETGGMARQADGSVTVSCGNNVVLVTTVVKKSVADGTDFFPLSVHYLEKTYAAGKIPGGFLRREGRPSEEQILISRLIDRSIRPSFPDGFFNEIQIVATVLSYDGAFSPDILALIGASASLAISGAPYDDVVAGVRVGYTNGKYILNPNKQDLRDSDLDLVVSGTYDAILMVESEANSLPESVMLGGILYAHKHLKTIINSINRLAKVASKPRIEYSIYQINKFLKSQIKSQFFGEIKNTYTIASKQERNLKLNAIRKNVLEYIFSSDVDGNEYTEKEILEAFHDIEKDLVRSNILEGKPRIDGRCTETIRPINVKIGVLPGVHGSALFTRGETQALVVTTLGSDRDAQLVESLDGIEKCRYMLHYNFPPYSVGECGMVGMAPKRREIGHANLAKRATQAVFPNEEAYPYVVRVVSEILESNGSSSMATVCGSSLSMMDAGVPIAEPVAGIAMGLIKDGAKYAVLSDILGDEDHLGDMDFKVAGTRYGVTALQMDIKIKGISREILEQALEQARVGRLHILGIMNEVIKEHKEAVSDVAPQIHVMNINPAKIKDVVGRGGATVKGIVEKTGAQIDTSDSGEVKVFAKDKKSMDMAVAMIEEIVAEVEEGQVYKGKIVKLLDSGVFVNLLGSQDGYLPFSEIEQAGMKTNSLVEGQGLEVLVQNIDRGGRVKLSLVAR</sequence>
<comment type="function">
    <text evidence="1">Involved in mRNA degradation. Catalyzes the phosphorolysis of single-stranded polyribonucleotides processively in the 3'- to 5'-direction.</text>
</comment>
<comment type="catalytic activity">
    <reaction evidence="1">
        <text>RNA(n+1) + phosphate = RNA(n) + a ribonucleoside 5'-diphosphate</text>
        <dbReference type="Rhea" id="RHEA:22096"/>
        <dbReference type="Rhea" id="RHEA-COMP:14527"/>
        <dbReference type="Rhea" id="RHEA-COMP:17342"/>
        <dbReference type="ChEBI" id="CHEBI:43474"/>
        <dbReference type="ChEBI" id="CHEBI:57930"/>
        <dbReference type="ChEBI" id="CHEBI:140395"/>
        <dbReference type="EC" id="2.7.7.8"/>
    </reaction>
</comment>
<comment type="cofactor">
    <cofactor evidence="1">
        <name>Mg(2+)</name>
        <dbReference type="ChEBI" id="CHEBI:18420"/>
    </cofactor>
</comment>
<comment type="subunit">
    <text evidence="1">Component of the RNA degradosome, which is a multiprotein complex involved in RNA processing and mRNA degradation.</text>
</comment>
<comment type="subcellular location">
    <subcellularLocation>
        <location evidence="1">Cytoplasm</location>
    </subcellularLocation>
</comment>
<comment type="similarity">
    <text evidence="1">Belongs to the polyribonucleotide nucleotidyltransferase family.</text>
</comment>
<keyword id="KW-0963">Cytoplasm</keyword>
<keyword id="KW-0460">Magnesium</keyword>
<keyword id="KW-0479">Metal-binding</keyword>
<keyword id="KW-0548">Nucleotidyltransferase</keyword>
<keyword id="KW-0694">RNA-binding</keyword>
<keyword id="KW-0808">Transferase</keyword>
<feature type="chain" id="PRO_0000329649" description="Polyribonucleotide nucleotidyltransferase">
    <location>
        <begin position="1"/>
        <end position="693"/>
    </location>
</feature>
<feature type="domain" description="KH" evidence="1">
    <location>
        <begin position="556"/>
        <end position="615"/>
    </location>
</feature>
<feature type="domain" description="S1 motif" evidence="1">
    <location>
        <begin position="625"/>
        <end position="693"/>
    </location>
</feature>
<feature type="binding site" evidence="1">
    <location>
        <position position="489"/>
    </location>
    <ligand>
        <name>Mg(2+)</name>
        <dbReference type="ChEBI" id="CHEBI:18420"/>
    </ligand>
</feature>
<feature type="binding site" evidence="1">
    <location>
        <position position="495"/>
    </location>
    <ligand>
        <name>Mg(2+)</name>
        <dbReference type="ChEBI" id="CHEBI:18420"/>
    </ligand>
</feature>
<proteinExistence type="inferred from homology"/>
<gene>
    <name evidence="1" type="primary">pnp</name>
    <name type="ordered locus">FTA_1621</name>
</gene>
<evidence type="ECO:0000255" key="1">
    <source>
        <dbReference type="HAMAP-Rule" id="MF_01595"/>
    </source>
</evidence>
<name>PNP_FRATF</name>
<organism>
    <name type="scientific">Francisella tularensis subsp. holarctica (strain FTNF002-00 / FTA)</name>
    <dbReference type="NCBI Taxonomy" id="458234"/>
    <lineage>
        <taxon>Bacteria</taxon>
        <taxon>Pseudomonadati</taxon>
        <taxon>Pseudomonadota</taxon>
        <taxon>Gammaproteobacteria</taxon>
        <taxon>Thiotrichales</taxon>
        <taxon>Francisellaceae</taxon>
        <taxon>Francisella</taxon>
    </lineage>
</organism>
<reference key="1">
    <citation type="journal article" date="2009" name="PLoS ONE">
        <title>Complete genome sequence of Francisella tularensis subspecies holarctica FTNF002-00.</title>
        <authorList>
            <person name="Barabote R.D."/>
            <person name="Xie G."/>
            <person name="Brettin T.S."/>
            <person name="Hinrichs S.H."/>
            <person name="Fey P.D."/>
            <person name="Jay J.J."/>
            <person name="Engle J.L."/>
            <person name="Godbole S.D."/>
            <person name="Noronha J.M."/>
            <person name="Scheuermann R.H."/>
            <person name="Zhou L.W."/>
            <person name="Lion C."/>
            <person name="Dempsey M.P."/>
        </authorList>
    </citation>
    <scope>NUCLEOTIDE SEQUENCE [LARGE SCALE GENOMIC DNA]</scope>
    <source>
        <strain>FTNF002-00 / FTA</strain>
    </source>
</reference>
<protein>
    <recommendedName>
        <fullName evidence="1">Polyribonucleotide nucleotidyltransferase</fullName>
        <ecNumber evidence="1">2.7.7.8</ecNumber>
    </recommendedName>
    <alternativeName>
        <fullName evidence="1">Polynucleotide phosphorylase</fullName>
        <shortName evidence="1">PNPase</shortName>
    </alternativeName>
</protein>